<gene>
    <name evidence="1" type="primary">gatA</name>
    <name type="ordered locus">STK_12830</name>
</gene>
<feature type="chain" id="PRO_0000105238" description="Glutamyl-tRNA(Gln) amidotransferase subunit A">
    <location>
        <begin position="1"/>
        <end position="472"/>
    </location>
</feature>
<feature type="active site" description="Charge relay system" evidence="1">
    <location>
        <position position="69"/>
    </location>
</feature>
<feature type="active site" description="Charge relay system" evidence="1">
    <location>
        <position position="144"/>
    </location>
</feature>
<feature type="active site" description="Acyl-ester intermediate" evidence="1">
    <location>
        <position position="168"/>
    </location>
</feature>
<organism>
    <name type="scientific">Sulfurisphaera tokodaii (strain DSM 16993 / JCM 10545 / NBRC 100140 / 7)</name>
    <name type="common">Sulfolobus tokodaii</name>
    <dbReference type="NCBI Taxonomy" id="273063"/>
    <lineage>
        <taxon>Archaea</taxon>
        <taxon>Thermoproteota</taxon>
        <taxon>Thermoprotei</taxon>
        <taxon>Sulfolobales</taxon>
        <taxon>Sulfolobaceae</taxon>
        <taxon>Sulfurisphaera</taxon>
    </lineage>
</organism>
<dbReference type="EC" id="6.3.5.7" evidence="1"/>
<dbReference type="EMBL" id="BA000023">
    <property type="protein sequence ID" value="BAK54507.1"/>
    <property type="molecule type" value="Genomic_DNA"/>
</dbReference>
<dbReference type="RefSeq" id="WP_052846522.1">
    <property type="nucleotide sequence ID" value="NC_003106.2"/>
</dbReference>
<dbReference type="SMR" id="Q971U6"/>
<dbReference type="STRING" id="273063.STK_12830"/>
<dbReference type="GeneID" id="1459282"/>
<dbReference type="KEGG" id="sto:STK_12830"/>
<dbReference type="PATRIC" id="fig|273063.9.peg.1440"/>
<dbReference type="eggNOG" id="arCOG01717">
    <property type="taxonomic scope" value="Archaea"/>
</dbReference>
<dbReference type="OrthoDB" id="7931at2157"/>
<dbReference type="Proteomes" id="UP000001015">
    <property type="component" value="Chromosome"/>
</dbReference>
<dbReference type="GO" id="GO:0030956">
    <property type="term" value="C:glutamyl-tRNA(Gln) amidotransferase complex"/>
    <property type="evidence" value="ECO:0007669"/>
    <property type="project" value="InterPro"/>
</dbReference>
<dbReference type="GO" id="GO:0005524">
    <property type="term" value="F:ATP binding"/>
    <property type="evidence" value="ECO:0007669"/>
    <property type="project" value="UniProtKB-KW"/>
</dbReference>
<dbReference type="GO" id="GO:0050567">
    <property type="term" value="F:glutaminyl-tRNA synthase (glutamine-hydrolyzing) activity"/>
    <property type="evidence" value="ECO:0007669"/>
    <property type="project" value="UniProtKB-UniRule"/>
</dbReference>
<dbReference type="GO" id="GO:0006412">
    <property type="term" value="P:translation"/>
    <property type="evidence" value="ECO:0007669"/>
    <property type="project" value="UniProtKB-UniRule"/>
</dbReference>
<dbReference type="Gene3D" id="3.90.1300.10">
    <property type="entry name" value="Amidase signature (AS) domain"/>
    <property type="match status" value="1"/>
</dbReference>
<dbReference type="HAMAP" id="MF_00120">
    <property type="entry name" value="GatA"/>
    <property type="match status" value="1"/>
</dbReference>
<dbReference type="InterPro" id="IPR000120">
    <property type="entry name" value="Amidase"/>
</dbReference>
<dbReference type="InterPro" id="IPR020556">
    <property type="entry name" value="Amidase_CS"/>
</dbReference>
<dbReference type="InterPro" id="IPR023631">
    <property type="entry name" value="Amidase_dom"/>
</dbReference>
<dbReference type="InterPro" id="IPR036928">
    <property type="entry name" value="AS_sf"/>
</dbReference>
<dbReference type="InterPro" id="IPR004412">
    <property type="entry name" value="GatA"/>
</dbReference>
<dbReference type="NCBIfam" id="TIGR00132">
    <property type="entry name" value="gatA"/>
    <property type="match status" value="1"/>
</dbReference>
<dbReference type="PANTHER" id="PTHR11895:SF7">
    <property type="entry name" value="GLUTAMYL-TRNA(GLN) AMIDOTRANSFERASE SUBUNIT A, MITOCHONDRIAL"/>
    <property type="match status" value="1"/>
</dbReference>
<dbReference type="PANTHER" id="PTHR11895">
    <property type="entry name" value="TRANSAMIDASE"/>
    <property type="match status" value="1"/>
</dbReference>
<dbReference type="Pfam" id="PF01425">
    <property type="entry name" value="Amidase"/>
    <property type="match status" value="1"/>
</dbReference>
<dbReference type="SUPFAM" id="SSF75304">
    <property type="entry name" value="Amidase signature (AS) enzymes"/>
    <property type="match status" value="1"/>
</dbReference>
<dbReference type="PROSITE" id="PS00571">
    <property type="entry name" value="AMIDASES"/>
    <property type="match status" value="1"/>
</dbReference>
<evidence type="ECO:0000255" key="1">
    <source>
        <dbReference type="HAMAP-Rule" id="MF_00120"/>
    </source>
</evidence>
<reference key="1">
    <citation type="journal article" date="2001" name="DNA Res.">
        <title>Complete genome sequence of an aerobic thermoacidophilic Crenarchaeon, Sulfolobus tokodaii strain7.</title>
        <authorList>
            <person name="Kawarabayasi Y."/>
            <person name="Hino Y."/>
            <person name="Horikawa H."/>
            <person name="Jin-no K."/>
            <person name="Takahashi M."/>
            <person name="Sekine M."/>
            <person name="Baba S."/>
            <person name="Ankai A."/>
            <person name="Kosugi H."/>
            <person name="Hosoyama A."/>
            <person name="Fukui S."/>
            <person name="Nagai Y."/>
            <person name="Nishijima K."/>
            <person name="Otsuka R."/>
            <person name="Nakazawa H."/>
            <person name="Takamiya M."/>
            <person name="Kato Y."/>
            <person name="Yoshizawa T."/>
            <person name="Tanaka T."/>
            <person name="Kudoh Y."/>
            <person name="Yamazaki J."/>
            <person name="Kushida N."/>
            <person name="Oguchi A."/>
            <person name="Aoki K."/>
            <person name="Masuda S."/>
            <person name="Yanagii M."/>
            <person name="Nishimura M."/>
            <person name="Yamagishi A."/>
            <person name="Oshima T."/>
            <person name="Kikuchi H."/>
        </authorList>
    </citation>
    <scope>NUCLEOTIDE SEQUENCE [LARGE SCALE GENOMIC DNA]</scope>
    <source>
        <strain>DSM 16993 / JCM 10545 / NBRC 100140 / 7</strain>
    </source>
</reference>
<accession>Q971U6</accession>
<accession>F9VNZ9</accession>
<keyword id="KW-0067">ATP-binding</keyword>
<keyword id="KW-0436">Ligase</keyword>
<keyword id="KW-0547">Nucleotide-binding</keyword>
<keyword id="KW-0648">Protein biosynthesis</keyword>
<keyword id="KW-1185">Reference proteome</keyword>
<protein>
    <recommendedName>
        <fullName evidence="1">Glutamyl-tRNA(Gln) amidotransferase subunit A</fullName>
        <shortName evidence="1">Glu-ADT subunit A</shortName>
        <ecNumber evidence="1">6.3.5.7</ecNumber>
    </recommendedName>
</protein>
<name>GATA_SULTO</name>
<comment type="function">
    <text evidence="1">Allows the formation of correctly charged Gln-tRNA(Gln) through the transamidation of misacylated Glu-tRNA(Gln) in organisms which lack glutaminyl-tRNA synthetase. The reaction takes place in the presence of glutamine and ATP through an activated gamma-phospho-Glu-tRNA(Gln).</text>
</comment>
<comment type="catalytic activity">
    <reaction evidence="1">
        <text>L-glutamyl-tRNA(Gln) + L-glutamine + ATP + H2O = L-glutaminyl-tRNA(Gln) + L-glutamate + ADP + phosphate + H(+)</text>
        <dbReference type="Rhea" id="RHEA:17521"/>
        <dbReference type="Rhea" id="RHEA-COMP:9681"/>
        <dbReference type="Rhea" id="RHEA-COMP:9684"/>
        <dbReference type="ChEBI" id="CHEBI:15377"/>
        <dbReference type="ChEBI" id="CHEBI:15378"/>
        <dbReference type="ChEBI" id="CHEBI:29985"/>
        <dbReference type="ChEBI" id="CHEBI:30616"/>
        <dbReference type="ChEBI" id="CHEBI:43474"/>
        <dbReference type="ChEBI" id="CHEBI:58359"/>
        <dbReference type="ChEBI" id="CHEBI:78520"/>
        <dbReference type="ChEBI" id="CHEBI:78521"/>
        <dbReference type="ChEBI" id="CHEBI:456216"/>
        <dbReference type="EC" id="6.3.5.7"/>
    </reaction>
</comment>
<comment type="subunit">
    <text evidence="1">Heterotrimer of A, B and C subunits.</text>
</comment>
<comment type="similarity">
    <text evidence="1">Belongs to the amidase family. GatA subfamily.</text>
</comment>
<sequence length="472" mass="52062">MIMKLVEDLLNKNLDIDEYVERTYERIEKIEKKIKAFITIRDKEEVKREVREKLKNPKGKLSGILIAIKDNISTKGIRTTCASRMLEDYVPPYDATVIEKLKQEGAVILGKTNMDEFAMGSTTETSYFGPTRNPWDLERTPGGSSGGSGAALAAGIVDIALGSDTGGSIRAPAAYNAVFGLKPSYGTVSRFGLVAYANSLEQIGPMAKNAEDLALLYSIISGDDPKDATTIHFEPQVPEKVELKDVKIAVLKDIVEASDKPVVSIFNSTLDKLSSEGAIIKEVNLGYAEYALPAYYIIAMSEASSNLARFDGVRYGYSKYSEGNWRETFAKNRGEGFGIEVKRRILLGSFILSAGYYEEFYIKALKIRRLIKDNVDNILKEFDLIASPTMPILPPKIGEVVEDPIKMYAMDLNTVIANLAGVPALSQPAGFYNNLPIGLQLMGRYLSDYYIMAISAKIEKVLNLYDLTAPIS</sequence>
<proteinExistence type="inferred from homology"/>